<dbReference type="EC" id="3.4.19.12" evidence="4"/>
<dbReference type="EMBL" id="AB014761">
    <property type="protein sequence ID" value="BAB87802.1"/>
    <property type="molecule type" value="mRNA"/>
</dbReference>
<dbReference type="EMBL" id="AK023459">
    <property type="protein sequence ID" value="BAB14582.1"/>
    <property type="molecule type" value="mRNA"/>
</dbReference>
<dbReference type="EMBL" id="AL833873">
    <property type="protein sequence ID" value="CAD38730.1"/>
    <property type="molecule type" value="mRNA"/>
</dbReference>
<dbReference type="EMBL" id="CR457315">
    <property type="protein sequence ID" value="CAG33596.1"/>
    <property type="molecule type" value="mRNA"/>
</dbReference>
<dbReference type="EMBL" id="AF176916">
    <property type="protein sequence ID" value="AAQ13660.1"/>
    <property type="status" value="ALT_FRAME"/>
    <property type="molecule type" value="mRNA"/>
</dbReference>
<dbReference type="EMBL" id="AL590439">
    <property type="status" value="NOT_ANNOTATED_CDS"/>
    <property type="molecule type" value="Genomic_DNA"/>
</dbReference>
<dbReference type="EMBL" id="CH471072">
    <property type="protein sequence ID" value="EAW86233.1"/>
    <property type="status" value="ALT_SEQ"/>
    <property type="molecule type" value="Genomic_DNA"/>
</dbReference>
<dbReference type="EMBL" id="CH471072">
    <property type="protein sequence ID" value="EAW86234.1"/>
    <property type="molecule type" value="Genomic_DNA"/>
</dbReference>
<dbReference type="EMBL" id="BC020605">
    <property type="protein sequence ID" value="AAH20605.1"/>
    <property type="molecule type" value="mRNA"/>
</dbReference>
<dbReference type="EMBL" id="BC061585">
    <property type="protein sequence ID" value="AAH61585.1"/>
    <property type="status" value="ALT_SEQ"/>
    <property type="molecule type" value="mRNA"/>
</dbReference>
<dbReference type="EMBL" id="BC067799">
    <property type="protein sequence ID" value="AAH67799.1"/>
    <property type="molecule type" value="mRNA"/>
</dbReference>
<dbReference type="EMBL" id="AF063600">
    <property type="protein sequence ID" value="AAG43159.1"/>
    <property type="status" value="ALT_INIT"/>
    <property type="molecule type" value="mRNA"/>
</dbReference>
<dbReference type="CCDS" id="CCDS7110.1">
    <molecule id="Q9H8M7-1"/>
</dbReference>
<dbReference type="PIR" id="JC7861">
    <property type="entry name" value="JC7861"/>
</dbReference>
<dbReference type="RefSeq" id="NP_001305259.1">
    <property type="nucleotide sequence ID" value="NM_001318330.1"/>
</dbReference>
<dbReference type="RefSeq" id="NP_079224.1">
    <molecule id="Q9H8M7-1"/>
    <property type="nucleotide sequence ID" value="NM_024948.4"/>
</dbReference>
<dbReference type="RefSeq" id="XP_005252657.1">
    <property type="nucleotide sequence ID" value="XM_005252600.2"/>
</dbReference>
<dbReference type="RefSeq" id="XP_005252659.1">
    <property type="nucleotide sequence ID" value="XM_005252602.2"/>
</dbReference>
<dbReference type="RefSeq" id="XP_011517996.1">
    <property type="nucleotide sequence ID" value="XM_011519694.1"/>
</dbReference>
<dbReference type="RefSeq" id="XP_016872162.1">
    <property type="nucleotide sequence ID" value="XM_017016673.1"/>
</dbReference>
<dbReference type="BioGRID" id="123069">
    <property type="interactions" value="47"/>
</dbReference>
<dbReference type="FunCoup" id="Q9H8M7">
    <property type="interactions" value="3180"/>
</dbReference>
<dbReference type="IntAct" id="Q9H8M7">
    <property type="interactions" value="35"/>
</dbReference>
<dbReference type="STRING" id="9606.ENSP00000277632"/>
<dbReference type="GlyGen" id="Q9H8M7">
    <property type="glycosylation" value="1 site, 1 O-linked glycan (1 site)"/>
</dbReference>
<dbReference type="iPTMnet" id="Q9H8M7"/>
<dbReference type="MetOSite" id="Q9H8M7"/>
<dbReference type="PhosphoSitePlus" id="Q9H8M7"/>
<dbReference type="BioMuta" id="MINDY3"/>
<dbReference type="DMDM" id="74761533"/>
<dbReference type="jPOST" id="Q9H8M7"/>
<dbReference type="MassIVE" id="Q9H8M7"/>
<dbReference type="PaxDb" id="9606-ENSP00000277632"/>
<dbReference type="PeptideAtlas" id="Q9H8M7"/>
<dbReference type="ProteomicsDB" id="81227">
    <molecule id="Q9H8M7-1"/>
</dbReference>
<dbReference type="ProteomicsDB" id="81228">
    <molecule id="Q9H8M7-2"/>
</dbReference>
<dbReference type="Pumba" id="Q9H8M7"/>
<dbReference type="Antibodypedia" id="25119">
    <property type="antibodies" value="45 antibodies from 16 providers"/>
</dbReference>
<dbReference type="DNASU" id="80013"/>
<dbReference type="Ensembl" id="ENST00000277632.8">
    <molecule id="Q9H8M7-1"/>
    <property type="protein sequence ID" value="ENSP00000277632.3"/>
    <property type="gene ID" value="ENSG00000148481.14"/>
</dbReference>
<dbReference type="GeneID" id="80013"/>
<dbReference type="KEGG" id="hsa:80013"/>
<dbReference type="MANE-Select" id="ENST00000277632.8">
    <property type="protein sequence ID" value="ENSP00000277632.3"/>
    <property type="RefSeq nucleotide sequence ID" value="NM_024948.4"/>
    <property type="RefSeq protein sequence ID" value="NP_079224.1"/>
</dbReference>
<dbReference type="UCSC" id="uc001iod.2">
    <molecule id="Q9H8M7-1"/>
    <property type="organism name" value="human"/>
</dbReference>
<dbReference type="AGR" id="HGNC:23578"/>
<dbReference type="CTD" id="80013"/>
<dbReference type="GeneCards" id="MINDY3"/>
<dbReference type="HGNC" id="HGNC:23578">
    <property type="gene designation" value="MINDY3"/>
</dbReference>
<dbReference type="HPA" id="ENSG00000148481">
    <property type="expression patterns" value="Low tissue specificity"/>
</dbReference>
<dbReference type="MIM" id="611649">
    <property type="type" value="gene"/>
</dbReference>
<dbReference type="neXtProt" id="NX_Q9H8M7"/>
<dbReference type="OpenTargets" id="ENSG00000148481"/>
<dbReference type="PharmGKB" id="PA165548562"/>
<dbReference type="VEuPathDB" id="HostDB:ENSG00000148481"/>
<dbReference type="eggNOG" id="KOG2871">
    <property type="taxonomic scope" value="Eukaryota"/>
</dbReference>
<dbReference type="GeneTree" id="ENSGT00940000155958"/>
<dbReference type="HOGENOM" id="CLU_033478_0_0_1"/>
<dbReference type="InParanoid" id="Q9H8M7"/>
<dbReference type="OMA" id="VLQTKWP"/>
<dbReference type="OrthoDB" id="9981542at2759"/>
<dbReference type="PAN-GO" id="Q9H8M7">
    <property type="GO annotations" value="1 GO annotation based on evolutionary models"/>
</dbReference>
<dbReference type="PhylomeDB" id="Q9H8M7"/>
<dbReference type="TreeFam" id="TF323996"/>
<dbReference type="PathwayCommons" id="Q9H8M7"/>
<dbReference type="SignaLink" id="Q9H8M7"/>
<dbReference type="SIGNOR" id="Q9H8M7"/>
<dbReference type="BioGRID-ORCS" id="80013">
    <property type="hits" value="8 hits in 1197 CRISPR screens"/>
</dbReference>
<dbReference type="CD-CODE" id="91857CE7">
    <property type="entry name" value="Nucleolus"/>
</dbReference>
<dbReference type="ChiTaRS" id="FAM188A">
    <property type="organism name" value="human"/>
</dbReference>
<dbReference type="GenomeRNAi" id="80013"/>
<dbReference type="Pharos" id="Q9H8M7">
    <property type="development level" value="Tbio"/>
</dbReference>
<dbReference type="PRO" id="PR:Q9H8M7"/>
<dbReference type="Proteomes" id="UP000005640">
    <property type="component" value="Chromosome 10"/>
</dbReference>
<dbReference type="RNAct" id="Q9H8M7">
    <property type="molecule type" value="protein"/>
</dbReference>
<dbReference type="Bgee" id="ENSG00000148481">
    <property type="expression patterns" value="Expressed in mucosa of stomach and 191 other cell types or tissues"/>
</dbReference>
<dbReference type="ExpressionAtlas" id="Q9H8M7">
    <property type="expression patterns" value="baseline and differential"/>
</dbReference>
<dbReference type="GO" id="GO:0031965">
    <property type="term" value="C:nuclear membrane"/>
    <property type="evidence" value="ECO:0000314"/>
    <property type="project" value="HPA"/>
</dbReference>
<dbReference type="GO" id="GO:0005654">
    <property type="term" value="C:nucleoplasm"/>
    <property type="evidence" value="ECO:0000314"/>
    <property type="project" value="HPA"/>
</dbReference>
<dbReference type="GO" id="GO:0004843">
    <property type="term" value="F:cysteine-type deubiquitinase activity"/>
    <property type="evidence" value="ECO:0000314"/>
    <property type="project" value="UniProtKB"/>
</dbReference>
<dbReference type="GO" id="GO:1990380">
    <property type="term" value="F:K48-linked deubiquitinase activity"/>
    <property type="evidence" value="ECO:0000314"/>
    <property type="project" value="UniProtKB"/>
</dbReference>
<dbReference type="GO" id="GO:0006915">
    <property type="term" value="P:apoptotic process"/>
    <property type="evidence" value="ECO:0007669"/>
    <property type="project" value="UniProtKB-KW"/>
</dbReference>
<dbReference type="GO" id="GO:0071108">
    <property type="term" value="P:protein K48-linked deubiquitination"/>
    <property type="evidence" value="ECO:0007669"/>
    <property type="project" value="InterPro"/>
</dbReference>
<dbReference type="GO" id="GO:0006508">
    <property type="term" value="P:proteolysis"/>
    <property type="evidence" value="ECO:0007669"/>
    <property type="project" value="UniProtKB-KW"/>
</dbReference>
<dbReference type="FunFam" id="1.10.238.10:FF:000315">
    <property type="entry name" value="Ubiquitin carboxyl-terminal hydrolase MINDY-3"/>
    <property type="match status" value="1"/>
</dbReference>
<dbReference type="Gene3D" id="1.10.238.10">
    <property type="entry name" value="EF-hand"/>
    <property type="match status" value="1"/>
</dbReference>
<dbReference type="InterPro" id="IPR011992">
    <property type="entry name" value="EF-hand-dom_pair"/>
</dbReference>
<dbReference type="InterPro" id="IPR025257">
    <property type="entry name" value="MINDY-3/4_CD"/>
</dbReference>
<dbReference type="InterPro" id="IPR039785">
    <property type="entry name" value="MINY3/4"/>
</dbReference>
<dbReference type="PANTHER" id="PTHR12473:SF17">
    <property type="entry name" value="UBIQUITIN CARBOXYL-TERMINAL HYDROLASE MINDY-3"/>
    <property type="match status" value="1"/>
</dbReference>
<dbReference type="PANTHER" id="PTHR12473">
    <property type="entry name" value="UBIQUITIN CARBOXYL-TERMINAL HYDROLASE MINDY-4-RELATED"/>
    <property type="match status" value="1"/>
</dbReference>
<dbReference type="Pfam" id="PF13898">
    <property type="entry name" value="MINDY-3_4_CD"/>
    <property type="match status" value="1"/>
</dbReference>
<dbReference type="SMART" id="SM01174">
    <property type="entry name" value="DUF4205"/>
    <property type="match status" value="1"/>
</dbReference>
<dbReference type="SUPFAM" id="SSF47473">
    <property type="entry name" value="EF-hand"/>
    <property type="match status" value="1"/>
</dbReference>
<feature type="chain" id="PRO_0000317560" description="Ubiquitin carboxyl-terminal hydrolase MINDY-3">
    <location>
        <begin position="1"/>
        <end position="445"/>
    </location>
</feature>
<feature type="active site" description="Nucleophile" evidence="1">
    <location>
        <position position="51"/>
    </location>
</feature>
<feature type="active site" description="Proton acceptor" evidence="1">
    <location>
        <position position="287"/>
    </location>
</feature>
<feature type="modified residue" description="Phosphoserine" evidence="10">
    <location>
        <position position="125"/>
    </location>
</feature>
<feature type="splice variant" id="VSP_031039" description="In isoform 2." evidence="6 7">
    <location>
        <begin position="137"/>
        <end position="445"/>
    </location>
</feature>
<feature type="sequence conflict" description="In Ref. 5; CAG33596." evidence="8" ref="5">
    <original>Q</original>
    <variation>R</variation>
    <location>
        <position position="31"/>
    </location>
</feature>
<feature type="sequence conflict" description="In Ref. 9; AAH20605." evidence="8" ref="9">
    <original>S</original>
    <variation>G</variation>
    <location>
        <position position="96"/>
    </location>
</feature>
<feature type="sequence conflict" description="In Ref. 6; AAQ13660." evidence="8" ref="6">
    <original>L</original>
    <variation>V</variation>
    <location>
        <position position="111"/>
    </location>
</feature>
<feature type="sequence conflict" description="In Ref. 5; CAG33596." evidence="8" ref="5">
    <original>T</original>
    <variation>A</variation>
    <location>
        <position position="116"/>
    </location>
</feature>
<accession>Q9H8M7</accession>
<accession>Q5SZ68</accession>
<accession>Q5SZ69</accession>
<accession>Q5SZ70</accession>
<accession>Q6IA40</accession>
<accession>Q6P7P0</accession>
<accession>Q7Z2S1</accession>
<accession>Q8WUF1</accession>
<accession>Q9H3I4</accession>
<comment type="function">
    <text evidence="4">Hydrolase that can remove 'Lys-48'-linked conjugated ubiquitin from proteins.</text>
</comment>
<comment type="catalytic activity">
    <reaction evidence="4">
        <text>Thiol-dependent hydrolysis of ester, thioester, amide, peptide and isopeptide bonds formed by the C-terminal Gly of ubiquitin (a 76-residue protein attached to proteins as an intracellular targeting signal).</text>
        <dbReference type="EC" id="3.4.19.12"/>
    </reaction>
</comment>
<comment type="subunit">
    <text evidence="3">Interacts with COPS5.</text>
</comment>
<comment type="interaction">
    <interactant intactId="EBI-724928">
        <id>Q9H8M7</id>
    </interactant>
    <interactant intactId="EBI-594661">
        <id>Q92905</id>
        <label>COPS5</label>
    </interactant>
    <organismsDiffer>false</organismsDiffer>
    <experiments>3</experiments>
</comment>
<comment type="interaction">
    <interactant intactId="EBI-724928">
        <id>Q9H8M7</id>
    </interactant>
    <interactant intactId="EBI-724310">
        <id>Q15038</id>
        <label>DAZAP2</label>
    </interactant>
    <organismsDiffer>false</organismsDiffer>
    <experiments>3</experiments>
</comment>
<comment type="interaction">
    <interactant intactId="EBI-724928">
        <id>Q9H8M7</id>
    </interactant>
    <interactant intactId="EBI-746453">
        <id>P54725</id>
        <label>RAD23A</label>
    </interactant>
    <organismsDiffer>false</organismsDiffer>
    <experiments>7</experiments>
</comment>
<comment type="interaction">
    <interactant intactId="EBI-724928">
        <id>Q9H8M7</id>
    </interactant>
    <interactant intactId="EBI-727004">
        <id>O00560</id>
        <label>SDCBP</label>
    </interactant>
    <organismsDiffer>false</organismsDiffer>
    <experiments>3</experiments>
</comment>
<comment type="interaction">
    <interactant intactId="EBI-724928">
        <id>Q9H8M7</id>
    </interactant>
    <interactant intactId="EBI-6427421">
        <id>P0CI25</id>
        <label>TRIM49</label>
    </interactant>
    <organismsDiffer>false</organismsDiffer>
    <experiments>7</experiments>
</comment>
<comment type="interaction">
    <interactant intactId="EBI-724928">
        <id>Q9H8M7</id>
    </interactant>
    <interactant intactId="EBI-12889036">
        <id>P0CI26</id>
        <label>TRIM49C</label>
    </interactant>
    <organismsDiffer>false</organismsDiffer>
    <experiments>3</experiments>
</comment>
<comment type="subcellular location">
    <subcellularLocation>
        <location evidence="2">Nucleus</location>
    </subcellularLocation>
</comment>
<comment type="alternative products">
    <event type="alternative splicing"/>
    <isoform>
        <id>Q9H8M7-1</id>
        <name>1</name>
        <sequence type="displayed"/>
    </isoform>
    <isoform>
        <id>Q9H8M7-2</id>
        <name>2</name>
        <sequence type="described" ref="VSP_031039"/>
    </isoform>
</comment>
<comment type="tissue specificity">
    <text evidence="2 3">Widely expressed with high levels in heart, skeletal muscle, and kidney, and low levels in liver and brain (PubMed:12054670). Also expressed in lung (at protein level) (PubMed:21499297).</text>
</comment>
<comment type="similarity">
    <text evidence="8">Belongs to the MINDY deubiquitinase family. FAM188 subfamily.</text>
</comment>
<comment type="caution">
    <text evidence="8">Was named CARP for 'CARD domain-containing protein' by PubMed:12054670. However, no CARD domain is detected by any prediction tool.</text>
</comment>
<comment type="sequence caution" evidence="8">
    <conflict type="erroneous initiation">
        <sequence resource="EMBL-CDS" id="AAG43159"/>
    </conflict>
</comment>
<comment type="sequence caution" evidence="8">
    <conflict type="miscellaneous discrepancy">
        <sequence resource="EMBL-CDS" id="AAH61585"/>
    </conflict>
    <text>Contaminating sequence. Potential poly-A sequence.</text>
</comment>
<comment type="sequence caution" evidence="8">
    <conflict type="frameshift">
        <sequence resource="EMBL-CDS" id="AAQ13660"/>
    </conflict>
</comment>
<comment type="sequence caution" evidence="8">
    <conflict type="erroneous gene model prediction">
        <sequence resource="EMBL-CDS" id="EAW86233"/>
    </conflict>
</comment>
<name>MINY3_HUMAN</name>
<reference key="1">
    <citation type="journal article" date="2002" name="Biochem. Biophys. Res. Commun.">
        <title>CARP is a novel caspase recruitment domain containing pro-apoptotic protein.</title>
        <authorList>
            <person name="Liu B."/>
            <person name="Liu Y."/>
            <person name="Chen J."/>
            <person name="Wei Z."/>
            <person name="Yu H."/>
            <person name="Zhen Y."/>
            <person name="Lu L."/>
            <person name="Hui R.T."/>
        </authorList>
    </citation>
    <scope>NUCLEOTIDE SEQUENCE [MRNA] (ISOFORM 1)</scope>
    <scope>SUBCELLULAR LOCATION</scope>
    <scope>TISSUE SPECIFICITY</scope>
</reference>
<reference key="2">
    <citation type="submission" date="1998-05" db="EMBL/GenBank/DDBJ databases">
        <title>Molecular cloning of a dermal papilla derived gene.</title>
        <authorList>
            <person name="Ikeda A."/>
            <person name="Yamashita M."/>
            <person name="Yoshimoto M."/>
        </authorList>
    </citation>
    <scope>NUCLEOTIDE SEQUENCE [MRNA] (ISOFORM 1)</scope>
</reference>
<reference key="3">
    <citation type="journal article" date="2004" name="Nat. Genet.">
        <title>Complete sequencing and characterization of 21,243 full-length human cDNAs.</title>
        <authorList>
            <person name="Ota T."/>
            <person name="Suzuki Y."/>
            <person name="Nishikawa T."/>
            <person name="Otsuki T."/>
            <person name="Sugiyama T."/>
            <person name="Irie R."/>
            <person name="Wakamatsu A."/>
            <person name="Hayashi K."/>
            <person name="Sato H."/>
            <person name="Nagai K."/>
            <person name="Kimura K."/>
            <person name="Makita H."/>
            <person name="Sekine M."/>
            <person name="Obayashi M."/>
            <person name="Nishi T."/>
            <person name="Shibahara T."/>
            <person name="Tanaka T."/>
            <person name="Ishii S."/>
            <person name="Yamamoto J."/>
            <person name="Saito K."/>
            <person name="Kawai Y."/>
            <person name="Isono Y."/>
            <person name="Nakamura Y."/>
            <person name="Nagahari K."/>
            <person name="Murakami K."/>
            <person name="Yasuda T."/>
            <person name="Iwayanagi T."/>
            <person name="Wagatsuma M."/>
            <person name="Shiratori A."/>
            <person name="Sudo H."/>
            <person name="Hosoiri T."/>
            <person name="Kaku Y."/>
            <person name="Kodaira H."/>
            <person name="Kondo H."/>
            <person name="Sugawara M."/>
            <person name="Takahashi M."/>
            <person name="Kanda K."/>
            <person name="Yokoi T."/>
            <person name="Furuya T."/>
            <person name="Kikkawa E."/>
            <person name="Omura Y."/>
            <person name="Abe K."/>
            <person name="Kamihara K."/>
            <person name="Katsuta N."/>
            <person name="Sato K."/>
            <person name="Tanikawa M."/>
            <person name="Yamazaki M."/>
            <person name="Ninomiya K."/>
            <person name="Ishibashi T."/>
            <person name="Yamashita H."/>
            <person name="Murakawa K."/>
            <person name="Fujimori K."/>
            <person name="Tanai H."/>
            <person name="Kimata M."/>
            <person name="Watanabe M."/>
            <person name="Hiraoka S."/>
            <person name="Chiba Y."/>
            <person name="Ishida S."/>
            <person name="Ono Y."/>
            <person name="Takiguchi S."/>
            <person name="Watanabe S."/>
            <person name="Yosida M."/>
            <person name="Hotuta T."/>
            <person name="Kusano J."/>
            <person name="Kanehori K."/>
            <person name="Takahashi-Fujii A."/>
            <person name="Hara H."/>
            <person name="Tanase T.-O."/>
            <person name="Nomura Y."/>
            <person name="Togiya S."/>
            <person name="Komai F."/>
            <person name="Hara R."/>
            <person name="Takeuchi K."/>
            <person name="Arita M."/>
            <person name="Imose N."/>
            <person name="Musashino K."/>
            <person name="Yuuki H."/>
            <person name="Oshima A."/>
            <person name="Sasaki N."/>
            <person name="Aotsuka S."/>
            <person name="Yoshikawa Y."/>
            <person name="Matsunawa H."/>
            <person name="Ichihara T."/>
            <person name="Shiohata N."/>
            <person name="Sano S."/>
            <person name="Moriya S."/>
            <person name="Momiyama H."/>
            <person name="Satoh N."/>
            <person name="Takami S."/>
            <person name="Terashima Y."/>
            <person name="Suzuki O."/>
            <person name="Nakagawa S."/>
            <person name="Senoh A."/>
            <person name="Mizoguchi H."/>
            <person name="Goto Y."/>
            <person name="Shimizu F."/>
            <person name="Wakebe H."/>
            <person name="Hishigaki H."/>
            <person name="Watanabe T."/>
            <person name="Sugiyama A."/>
            <person name="Takemoto M."/>
            <person name="Kawakami B."/>
            <person name="Yamazaki M."/>
            <person name="Watanabe K."/>
            <person name="Kumagai A."/>
            <person name="Itakura S."/>
            <person name="Fukuzumi Y."/>
            <person name="Fujimori Y."/>
            <person name="Komiyama M."/>
            <person name="Tashiro H."/>
            <person name="Tanigami A."/>
            <person name="Fujiwara T."/>
            <person name="Ono T."/>
            <person name="Yamada K."/>
            <person name="Fujii Y."/>
            <person name="Ozaki K."/>
            <person name="Hirao M."/>
            <person name="Ohmori Y."/>
            <person name="Kawabata A."/>
            <person name="Hikiji T."/>
            <person name="Kobatake N."/>
            <person name="Inagaki H."/>
            <person name="Ikema Y."/>
            <person name="Okamoto S."/>
            <person name="Okitani R."/>
            <person name="Kawakami T."/>
            <person name="Noguchi S."/>
            <person name="Itoh T."/>
            <person name="Shigeta K."/>
            <person name="Senba T."/>
            <person name="Matsumura K."/>
            <person name="Nakajima Y."/>
            <person name="Mizuno T."/>
            <person name="Morinaga M."/>
            <person name="Sasaki M."/>
            <person name="Togashi T."/>
            <person name="Oyama M."/>
            <person name="Hata H."/>
            <person name="Watanabe M."/>
            <person name="Komatsu T."/>
            <person name="Mizushima-Sugano J."/>
            <person name="Satoh T."/>
            <person name="Shirai Y."/>
            <person name="Takahashi Y."/>
            <person name="Nakagawa K."/>
            <person name="Okumura K."/>
            <person name="Nagase T."/>
            <person name="Nomura N."/>
            <person name="Kikuchi H."/>
            <person name="Masuho Y."/>
            <person name="Yamashita R."/>
            <person name="Nakai K."/>
            <person name="Yada T."/>
            <person name="Nakamura Y."/>
            <person name="Ohara O."/>
            <person name="Isogai T."/>
            <person name="Sugano S."/>
        </authorList>
    </citation>
    <scope>NUCLEOTIDE SEQUENCE [LARGE SCALE MRNA] (ISOFORM 1)</scope>
    <source>
        <tissue>Placenta</tissue>
    </source>
</reference>
<reference key="4">
    <citation type="journal article" date="2007" name="BMC Genomics">
        <title>The full-ORF clone resource of the German cDNA consortium.</title>
        <authorList>
            <person name="Bechtel S."/>
            <person name="Rosenfelder H."/>
            <person name="Duda A."/>
            <person name="Schmidt C.P."/>
            <person name="Ernst U."/>
            <person name="Wellenreuther R."/>
            <person name="Mehrle A."/>
            <person name="Schuster C."/>
            <person name="Bahr A."/>
            <person name="Bloecker H."/>
            <person name="Heubner D."/>
            <person name="Hoerlein A."/>
            <person name="Michel G."/>
            <person name="Wedler H."/>
            <person name="Koehrer K."/>
            <person name="Ottenwaelder B."/>
            <person name="Poustka A."/>
            <person name="Wiemann S."/>
            <person name="Schupp I."/>
        </authorList>
    </citation>
    <scope>NUCLEOTIDE SEQUENCE [LARGE SCALE MRNA] (ISOFORM 1)</scope>
    <source>
        <tissue>Brain</tissue>
    </source>
</reference>
<reference key="5">
    <citation type="submission" date="2004-06" db="EMBL/GenBank/DDBJ databases">
        <title>Cloning of human full open reading frames in Gateway(TM) system entry vector (pDONR201).</title>
        <authorList>
            <person name="Ebert L."/>
            <person name="Schick M."/>
            <person name="Neubert P."/>
            <person name="Schatten R."/>
            <person name="Henze S."/>
            <person name="Korn B."/>
        </authorList>
    </citation>
    <scope>NUCLEOTIDE SEQUENCE [LARGE SCALE MRNA] (ISOFORM 1)</scope>
</reference>
<reference key="6">
    <citation type="submission" date="1999-08" db="EMBL/GenBank/DDBJ databases">
        <title>Homo sapiens normal aorta mRNA MST126.</title>
        <authorList>
            <person name="Liu B."/>
            <person name="Qin B.M."/>
            <person name="Sheng H."/>
            <person name="Zhao B."/>
            <person name="Liu Y.Q."/>
            <person name="Wang X.Y."/>
            <person name="Zhang Q."/>
            <person name="Song L."/>
            <person name="Liu B.H."/>
            <person name="Lu H."/>
            <person name="Xu H.S."/>
            <person name="Zheng W.Y."/>
            <person name="Gong J."/>
            <person name="Hui R.T."/>
        </authorList>
    </citation>
    <scope>NUCLEOTIDE SEQUENCE [LARGE SCALE MRNA] (ISOFORM 2)</scope>
    <source>
        <tissue>Aorta</tissue>
    </source>
</reference>
<reference key="7">
    <citation type="journal article" date="2004" name="Nature">
        <title>The DNA sequence and comparative analysis of human chromosome 10.</title>
        <authorList>
            <person name="Deloukas P."/>
            <person name="Earthrowl M.E."/>
            <person name="Grafham D.V."/>
            <person name="Rubenfield M."/>
            <person name="French L."/>
            <person name="Steward C.A."/>
            <person name="Sims S.K."/>
            <person name="Jones M.C."/>
            <person name="Searle S."/>
            <person name="Scott C."/>
            <person name="Howe K."/>
            <person name="Hunt S.E."/>
            <person name="Andrews T.D."/>
            <person name="Gilbert J.G.R."/>
            <person name="Swarbreck D."/>
            <person name="Ashurst J.L."/>
            <person name="Taylor A."/>
            <person name="Battles J."/>
            <person name="Bird C.P."/>
            <person name="Ainscough R."/>
            <person name="Almeida J.P."/>
            <person name="Ashwell R.I.S."/>
            <person name="Ambrose K.D."/>
            <person name="Babbage A.K."/>
            <person name="Bagguley C.L."/>
            <person name="Bailey J."/>
            <person name="Banerjee R."/>
            <person name="Bates K."/>
            <person name="Beasley H."/>
            <person name="Bray-Allen S."/>
            <person name="Brown A.J."/>
            <person name="Brown J.Y."/>
            <person name="Burford D.C."/>
            <person name="Burrill W."/>
            <person name="Burton J."/>
            <person name="Cahill P."/>
            <person name="Camire D."/>
            <person name="Carter N.P."/>
            <person name="Chapman J.C."/>
            <person name="Clark S.Y."/>
            <person name="Clarke G."/>
            <person name="Clee C.M."/>
            <person name="Clegg S."/>
            <person name="Corby N."/>
            <person name="Coulson A."/>
            <person name="Dhami P."/>
            <person name="Dutta I."/>
            <person name="Dunn M."/>
            <person name="Faulkner L."/>
            <person name="Frankish A."/>
            <person name="Frankland J.A."/>
            <person name="Garner P."/>
            <person name="Garnett J."/>
            <person name="Gribble S."/>
            <person name="Griffiths C."/>
            <person name="Grocock R."/>
            <person name="Gustafson E."/>
            <person name="Hammond S."/>
            <person name="Harley J.L."/>
            <person name="Hart E."/>
            <person name="Heath P.D."/>
            <person name="Ho T.P."/>
            <person name="Hopkins B."/>
            <person name="Horne J."/>
            <person name="Howden P.J."/>
            <person name="Huckle E."/>
            <person name="Hynds C."/>
            <person name="Johnson C."/>
            <person name="Johnson D."/>
            <person name="Kana A."/>
            <person name="Kay M."/>
            <person name="Kimberley A.M."/>
            <person name="Kershaw J.K."/>
            <person name="Kokkinaki M."/>
            <person name="Laird G.K."/>
            <person name="Lawlor S."/>
            <person name="Lee H.M."/>
            <person name="Leongamornlert D.A."/>
            <person name="Laird G."/>
            <person name="Lloyd C."/>
            <person name="Lloyd D.M."/>
            <person name="Loveland J."/>
            <person name="Lovell J."/>
            <person name="McLaren S."/>
            <person name="McLay K.E."/>
            <person name="McMurray A."/>
            <person name="Mashreghi-Mohammadi M."/>
            <person name="Matthews L."/>
            <person name="Milne S."/>
            <person name="Nickerson T."/>
            <person name="Nguyen M."/>
            <person name="Overton-Larty E."/>
            <person name="Palmer S.A."/>
            <person name="Pearce A.V."/>
            <person name="Peck A.I."/>
            <person name="Pelan S."/>
            <person name="Phillimore B."/>
            <person name="Porter K."/>
            <person name="Rice C.M."/>
            <person name="Rogosin A."/>
            <person name="Ross M.T."/>
            <person name="Sarafidou T."/>
            <person name="Sehra H.K."/>
            <person name="Shownkeen R."/>
            <person name="Skuce C.D."/>
            <person name="Smith M."/>
            <person name="Standring L."/>
            <person name="Sycamore N."/>
            <person name="Tester J."/>
            <person name="Thorpe A."/>
            <person name="Torcasso W."/>
            <person name="Tracey A."/>
            <person name="Tromans A."/>
            <person name="Tsolas J."/>
            <person name="Wall M."/>
            <person name="Walsh J."/>
            <person name="Wang H."/>
            <person name="Weinstock K."/>
            <person name="West A.P."/>
            <person name="Willey D.L."/>
            <person name="Whitehead S.L."/>
            <person name="Wilming L."/>
            <person name="Wray P.W."/>
            <person name="Young L."/>
            <person name="Chen Y."/>
            <person name="Lovering R.C."/>
            <person name="Moschonas N.K."/>
            <person name="Siebert R."/>
            <person name="Fechtel K."/>
            <person name="Bentley D."/>
            <person name="Durbin R.M."/>
            <person name="Hubbard T."/>
            <person name="Doucette-Stamm L."/>
            <person name="Beck S."/>
            <person name="Smith D.R."/>
            <person name="Rogers J."/>
        </authorList>
    </citation>
    <scope>NUCLEOTIDE SEQUENCE [LARGE SCALE GENOMIC DNA]</scope>
</reference>
<reference key="8">
    <citation type="submission" date="2005-09" db="EMBL/GenBank/DDBJ databases">
        <authorList>
            <person name="Mural R.J."/>
            <person name="Istrail S."/>
            <person name="Sutton G.G."/>
            <person name="Florea L."/>
            <person name="Halpern A.L."/>
            <person name="Mobarry C.M."/>
            <person name="Lippert R."/>
            <person name="Walenz B."/>
            <person name="Shatkay H."/>
            <person name="Dew I."/>
            <person name="Miller J.R."/>
            <person name="Flanigan M.J."/>
            <person name="Edwards N.J."/>
            <person name="Bolanos R."/>
            <person name="Fasulo D."/>
            <person name="Halldorsson B.V."/>
            <person name="Hannenhalli S."/>
            <person name="Turner R."/>
            <person name="Yooseph S."/>
            <person name="Lu F."/>
            <person name="Nusskern D.R."/>
            <person name="Shue B.C."/>
            <person name="Zheng X.H."/>
            <person name="Zhong F."/>
            <person name="Delcher A.L."/>
            <person name="Huson D.H."/>
            <person name="Kravitz S.A."/>
            <person name="Mouchard L."/>
            <person name="Reinert K."/>
            <person name="Remington K.A."/>
            <person name="Clark A.G."/>
            <person name="Waterman M.S."/>
            <person name="Eichler E.E."/>
            <person name="Adams M.D."/>
            <person name="Hunkapiller M.W."/>
            <person name="Myers E.W."/>
            <person name="Venter J.C."/>
        </authorList>
    </citation>
    <scope>NUCLEOTIDE SEQUENCE [LARGE SCALE GENOMIC DNA]</scope>
</reference>
<reference key="9">
    <citation type="journal article" date="2004" name="Genome Res.">
        <title>The status, quality, and expansion of the NIH full-length cDNA project: the Mammalian Gene Collection (MGC).</title>
        <authorList>
            <consortium name="The MGC Project Team"/>
        </authorList>
    </citation>
    <scope>NUCLEOTIDE SEQUENCE [LARGE SCALE MRNA] (ISOFORMS 1 AND 2)</scope>
    <source>
        <tissue>Brain</tissue>
        <tissue>Testis</tissue>
        <tissue>Uterus</tissue>
    </source>
</reference>
<reference key="10">
    <citation type="submission" date="1998-05" db="EMBL/GenBank/DDBJ databases">
        <authorList>
            <person name="Mao Y.M."/>
            <person name="Xie Y."/>
            <person name="Zheng Z.H."/>
        </authorList>
    </citation>
    <scope>NUCLEOTIDE SEQUENCE [LARGE SCALE MRNA] OF 176-445</scope>
    <source>
        <tissue>Fetal brain</tissue>
    </source>
</reference>
<reference key="11">
    <citation type="journal article" date="2008" name="Proc. Natl. Acad. Sci. U.S.A.">
        <title>A quantitative atlas of mitotic phosphorylation.</title>
        <authorList>
            <person name="Dephoure N."/>
            <person name="Zhou C."/>
            <person name="Villen J."/>
            <person name="Beausoleil S.A."/>
            <person name="Bakalarski C.E."/>
            <person name="Elledge S.J."/>
            <person name="Gygi S.P."/>
        </authorList>
    </citation>
    <scope>PHOSPHORYLATION [LARGE SCALE ANALYSIS] AT SER-125</scope>
    <scope>IDENTIFICATION BY MASS SPECTROMETRY [LARGE SCALE ANALYSIS]</scope>
    <source>
        <tissue>Cervix carcinoma</tissue>
    </source>
</reference>
<reference key="12">
    <citation type="journal article" date="2011" name="Oncogene">
        <title>C10ORF97 is a novel tumor-suppressor gene of non-small-cell lung cancer and a functional variant of this gene increases the risk of non-small-cell lung cancer.</title>
        <authorList>
            <person name="Shi Y."/>
            <person name="Chen J."/>
            <person name="Li Z."/>
            <person name="Zhang Z."/>
            <person name="Yu H."/>
            <person name="Sun K."/>
            <person name="Wang X."/>
            <person name="Song X."/>
            <person name="Wang Y."/>
            <person name="Zhen Y."/>
            <person name="Yang T."/>
            <person name="Lou K."/>
            <person name="Zhang Y."/>
            <person name="Zhang G."/>
            <person name="Hu Y."/>
            <person name="Ji J."/>
            <person name="Hui R."/>
        </authorList>
    </citation>
    <scope>INTERACTION WITH COPS5</scope>
    <scope>TISSUE SPECIFICITY</scope>
</reference>
<reference key="13">
    <citation type="journal article" date="2013" name="J. Proteome Res.">
        <title>Toward a comprehensive characterization of a human cancer cell phosphoproteome.</title>
        <authorList>
            <person name="Zhou H."/>
            <person name="Di Palma S."/>
            <person name="Preisinger C."/>
            <person name="Peng M."/>
            <person name="Polat A.N."/>
            <person name="Heck A.J."/>
            <person name="Mohammed S."/>
        </authorList>
    </citation>
    <scope>IDENTIFICATION BY MASS SPECTROMETRY [LARGE SCALE ANALYSIS]</scope>
    <source>
        <tissue>Erythroleukemia</tissue>
    </source>
</reference>
<reference key="14">
    <citation type="journal article" date="2016" name="Mol. Cell">
        <title>MINDY-1 is a member of an evolutionarily conserved and structurally distinct new family of deubiquitinating enzymes.</title>
        <authorList>
            <person name="Abdul Rehman S.A."/>
            <person name="Kristariyanto Y.A."/>
            <person name="Choi S.Y."/>
            <person name="Nkosi P.J."/>
            <person name="Weidlich S."/>
            <person name="Labib K."/>
            <person name="Hofmann K."/>
            <person name="Kulathu Y."/>
        </authorList>
    </citation>
    <scope>FUNCTION</scope>
    <scope>CATALYTIC ACTIVITY</scope>
    <scope>GENE FAMILY</scope>
</reference>
<protein>
    <recommendedName>
        <fullName evidence="8">Ubiquitin carboxyl-terminal hydrolase MINDY-3</fullName>
        <ecNumber evidence="4">3.4.19.12</ecNumber>
    </recommendedName>
    <alternativeName>
        <fullName evidence="5">Dermal papilla-derived protein 5</fullName>
    </alternativeName>
    <alternativeName>
        <fullName evidence="9">Deubiquitinating enzyme MINDY-3</fullName>
    </alternativeName>
    <alternativeName>
        <fullName evidence="5">Protein CARP</fullName>
    </alternativeName>
</protein>
<proteinExistence type="evidence at protein level"/>
<evidence type="ECO:0000250" key="1">
    <source>
        <dbReference type="UniProtKB" id="Q8N5J2"/>
    </source>
</evidence>
<evidence type="ECO:0000269" key="2">
    <source>
    </source>
</evidence>
<evidence type="ECO:0000269" key="3">
    <source>
    </source>
</evidence>
<evidence type="ECO:0000269" key="4">
    <source>
    </source>
</evidence>
<evidence type="ECO:0000303" key="5">
    <source>
    </source>
</evidence>
<evidence type="ECO:0000303" key="6">
    <source>
    </source>
</evidence>
<evidence type="ECO:0000303" key="7">
    <source ref="6"/>
</evidence>
<evidence type="ECO:0000305" key="8"/>
<evidence type="ECO:0000312" key="9">
    <source>
        <dbReference type="HGNC" id="HGNC:23578"/>
    </source>
</evidence>
<evidence type="ECO:0007744" key="10">
    <source>
    </source>
</evidence>
<keyword id="KW-0025">Alternative splicing</keyword>
<keyword id="KW-0053">Apoptosis</keyword>
<keyword id="KW-0378">Hydrolase</keyword>
<keyword id="KW-0539">Nucleus</keyword>
<keyword id="KW-0597">Phosphoprotein</keyword>
<keyword id="KW-0645">Protease</keyword>
<keyword id="KW-1267">Proteomics identification</keyword>
<keyword id="KW-1185">Reference proteome</keyword>
<keyword id="KW-0788">Thiol protease</keyword>
<keyword id="KW-0833">Ubl conjugation pathway</keyword>
<sequence length="445" mass="49725">MSELTKELMELVWGTKSSPGLSDTIFCRWTQGFVFSESEGSALEQFEGGPCAVIAPVQAFLLKKLLFSSEKSSWRDCSEEEQKELLCHTLCDILESACCDHSGSYCLVSWLRGKTTEETASISGSPAESSCQVEHSSALAVEELGFERFHALIQKRSFRSLPELKDAVLDQYSMWGNKFGVLLFLYSVLLTKGIENIKNEIEDASEPLIDPVYGHGSQSLINLLLTGHAVSNVWDGDRECSGMKLLGIHEQAAVGFLTLMEALRYCKVGSYLKSPKFPIWIVGSETHLTVFFAKDMALVAPEAPSEQARRVFQTYDPEDNGFIPDSLLEDVMKALDLVSDPEYINLMKNKLDPEGLGIILLGPFLQEFFPDQGSSGPESFTVYHYNGLKQSNYNEKVMYVEGTAVVMGFEDPMLQTDDTPIKRCLQTKWPYIELLWTTDRSPSLN</sequence>
<gene>
    <name evidence="9" type="primary">MINDY3</name>
    <name evidence="9" type="synonym">C10orf97</name>
    <name evidence="5" type="synonym">CARP</name>
    <name evidence="5" type="synonym">DERP5</name>
    <name evidence="9" type="synonym">FAM188A</name>
    <name evidence="7" type="ORF">MSTP126</name>
    <name evidence="9" type="ORF">My042</name>
</gene>
<organism>
    <name type="scientific">Homo sapiens</name>
    <name type="common">Human</name>
    <dbReference type="NCBI Taxonomy" id="9606"/>
    <lineage>
        <taxon>Eukaryota</taxon>
        <taxon>Metazoa</taxon>
        <taxon>Chordata</taxon>
        <taxon>Craniata</taxon>
        <taxon>Vertebrata</taxon>
        <taxon>Euteleostomi</taxon>
        <taxon>Mammalia</taxon>
        <taxon>Eutheria</taxon>
        <taxon>Euarchontoglires</taxon>
        <taxon>Primates</taxon>
        <taxon>Haplorrhini</taxon>
        <taxon>Catarrhini</taxon>
        <taxon>Hominidae</taxon>
        <taxon>Homo</taxon>
    </lineage>
</organism>